<comment type="function">
    <text>Production of cholesterol by reduction of C7-C8 double bond of 7-dehydrocholesterol (7-DHC). Lesions in the gene coding for the enzyme cause dwarfism.</text>
</comment>
<comment type="catalytic activity">
    <reaction>
        <text>cholesterol + NADP(+) = 7-dehydrocholesterol + NADPH + H(+)</text>
        <dbReference type="Rhea" id="RHEA:23984"/>
        <dbReference type="ChEBI" id="CHEBI:15378"/>
        <dbReference type="ChEBI" id="CHEBI:16113"/>
        <dbReference type="ChEBI" id="CHEBI:17759"/>
        <dbReference type="ChEBI" id="CHEBI:57783"/>
        <dbReference type="ChEBI" id="CHEBI:58349"/>
        <dbReference type="EC" id="1.3.1.21"/>
    </reaction>
</comment>
<comment type="pathway">
    <text>Lipid metabolism; steroid biosynthesis.</text>
</comment>
<comment type="interaction">
    <interactant intactId="EBI-4439540">
        <id>Q9LDU6</id>
    </interactant>
    <interactant intactId="EBI-4424378">
        <id>Q8VZW1</id>
        <label>NIP1-1</label>
    </interactant>
    <organismsDiffer>false</organismsDiffer>
    <experiments>2</experiments>
</comment>
<comment type="subcellular location">
    <subcellularLocation>
        <location>Endoplasmic reticulum membrane</location>
        <topology>Multi-pass membrane protein</topology>
    </subcellularLocation>
</comment>
<comment type="alternative products">
    <event type="alternative splicing"/>
    <isoform>
        <id>Q9LDU6-1</id>
        <name>1</name>
        <sequence type="displayed"/>
    </isoform>
    <text>A number of isoforms are produced. According to EST sequences.</text>
</comment>
<comment type="similarity">
    <text evidence="3">Belongs to the ERG4/ERG24 family.</text>
</comment>
<sequence length="432" mass="49591">MAETVHSPIVTYASMLSLLAFCPPFVILLWYTMVHQDGSVTQTFGFFWENGVQGLINIWPRPTLIAWKIIFCYGAFEAILQLLLPGKRVEGPISPAGNRPVYKANGLAAYFVTLATYLGLWWFGIFNPAIVYDHLGEIFSALIFGSFIFCVLLYIKGHVAPSSSDSGSCGNLIIDFYWGMELYPRIGKSFDIKVFTNCRFGMMSWAVLAVTYCIKQYEINGKVSDSMLVNTILMLVYVTKFFWWEAGYWNTMDIAHDRAGFYICWGCLVWVPSVYTSPGMYLVNHPVELGTQLAIYILVAGILCIYINYDCDRQRQEFRRTNGKCLVWGRAPSKIVASYTTTSGETKTSLLLTSGWWGLARHFHYVPEILSAFFWTVPALFDNFLAYFYVIFLTLLLFDRAKRDDDRCRSKYGKYWKLYCEKVKYRIIPGIY</sequence>
<gene>
    <name type="primary">DWF5</name>
    <name type="synonym">ST7R</name>
    <name type="ordered locus">At1g50430</name>
    <name type="ORF">F11F12.21</name>
</gene>
<keyword id="KW-0025">Alternative splicing</keyword>
<keyword id="KW-0152">Cholesterol biosynthesis</keyword>
<keyword id="KW-0153">Cholesterol metabolism</keyword>
<keyword id="KW-0256">Endoplasmic reticulum</keyword>
<keyword id="KW-0444">Lipid biosynthesis</keyword>
<keyword id="KW-0443">Lipid metabolism</keyword>
<keyword id="KW-0472">Membrane</keyword>
<keyword id="KW-0521">NADP</keyword>
<keyword id="KW-0560">Oxidoreductase</keyword>
<keyword id="KW-1185">Reference proteome</keyword>
<keyword id="KW-0752">Steroid biosynthesis</keyword>
<keyword id="KW-0753">Steroid metabolism</keyword>
<keyword id="KW-0756">Sterol biosynthesis</keyword>
<keyword id="KW-1207">Sterol metabolism</keyword>
<keyword id="KW-0812">Transmembrane</keyword>
<keyword id="KW-1133">Transmembrane helix</keyword>
<name>ST7R_ARATH</name>
<protein>
    <recommendedName>
        <fullName>7-dehydrocholesterol reductase</fullName>
        <shortName>7-DHC reductase</shortName>
        <ecNumber>1.3.1.21</ecNumber>
    </recommendedName>
    <alternativeName>
        <fullName>Protein DWARF 5</fullName>
    </alternativeName>
    <alternativeName>
        <fullName>Sterol Delta(7)-reductase</fullName>
    </alternativeName>
</protein>
<evidence type="ECO:0000255" key="1"/>
<evidence type="ECO:0000269" key="2">
    <source>
    </source>
</evidence>
<evidence type="ECO:0000305" key="3"/>
<organism>
    <name type="scientific">Arabidopsis thaliana</name>
    <name type="common">Mouse-ear cress</name>
    <dbReference type="NCBI Taxonomy" id="3702"/>
    <lineage>
        <taxon>Eukaryota</taxon>
        <taxon>Viridiplantae</taxon>
        <taxon>Streptophyta</taxon>
        <taxon>Embryophyta</taxon>
        <taxon>Tracheophyta</taxon>
        <taxon>Spermatophyta</taxon>
        <taxon>Magnoliopsida</taxon>
        <taxon>eudicotyledons</taxon>
        <taxon>Gunneridae</taxon>
        <taxon>Pentapetalae</taxon>
        <taxon>rosids</taxon>
        <taxon>malvids</taxon>
        <taxon>Brassicales</taxon>
        <taxon>Brassicaceae</taxon>
        <taxon>Camelineae</taxon>
        <taxon>Arabidopsis</taxon>
    </lineage>
</organism>
<accession>Q9LDU6</accession>
<accession>Q38930</accession>
<feature type="chain" id="PRO_0000207509" description="7-dehydrocholesterol reductase">
    <location>
        <begin position="1"/>
        <end position="432"/>
    </location>
</feature>
<feature type="transmembrane region" description="Helical" evidence="1">
    <location>
        <begin position="12"/>
        <end position="34"/>
    </location>
</feature>
<feature type="transmembrane region" description="Helical" evidence="1">
    <location>
        <begin position="64"/>
        <end position="86"/>
    </location>
</feature>
<feature type="transmembrane region" description="Helical" evidence="1">
    <location>
        <begin position="107"/>
        <end position="126"/>
    </location>
</feature>
<feature type="transmembrane region" description="Helical" evidence="1">
    <location>
        <begin position="136"/>
        <end position="155"/>
    </location>
</feature>
<feature type="transmembrane region" description="Helical" evidence="1">
    <location>
        <begin position="195"/>
        <end position="212"/>
    </location>
</feature>
<feature type="transmembrane region" description="Helical" evidence="1">
    <location>
        <begin position="227"/>
        <end position="249"/>
    </location>
</feature>
<feature type="transmembrane region" description="Helical" evidence="1">
    <location>
        <begin position="261"/>
        <end position="283"/>
    </location>
</feature>
<feature type="transmembrane region" description="Helical" evidence="1">
    <location>
        <begin position="287"/>
        <end position="309"/>
    </location>
</feature>
<feature type="transmembrane region" description="Helical" evidence="1">
    <location>
        <begin position="371"/>
        <end position="393"/>
    </location>
</feature>
<feature type="mutagenesis site" description="In DWF5-4; dwarf plant." evidence="2">
    <original>D</original>
    <variation>N</variation>
    <location>
        <position position="257"/>
    </location>
</feature>
<feature type="sequence conflict" description="In Ref. 1; AAC49278." evidence="3" ref="1">
    <original>Y</original>
    <variation>H</variation>
    <location>
        <position position="117"/>
    </location>
</feature>
<feature type="sequence conflict" description="In Ref. 1; AAC49278." evidence="3" ref="1">
    <original>N</original>
    <variation>K</variation>
    <location>
        <position position="308"/>
    </location>
</feature>
<feature type="sequence conflict" description="In Ref. 1; AAC49278." evidence="3" ref="1">
    <location>
        <begin position="391"/>
        <end position="392"/>
    </location>
</feature>
<proteinExistence type="evidence at protein level"/>
<dbReference type="EC" id="1.3.1.21"/>
<dbReference type="EMBL" id="U49398">
    <property type="protein sequence ID" value="AAC49278.1"/>
    <property type="molecule type" value="mRNA"/>
</dbReference>
<dbReference type="EMBL" id="AF239701">
    <property type="protein sequence ID" value="AAF63498.1"/>
    <property type="molecule type" value="Genomic_DNA"/>
</dbReference>
<dbReference type="EMBL" id="AC012561">
    <property type="protein sequence ID" value="AAF87888.1"/>
    <property type="molecule type" value="Genomic_DNA"/>
</dbReference>
<dbReference type="EMBL" id="CP002684">
    <property type="protein sequence ID" value="AEE32547.1"/>
    <property type="molecule type" value="Genomic_DNA"/>
</dbReference>
<dbReference type="EMBL" id="AY099589">
    <property type="protein sequence ID" value="AAM20440.1"/>
    <property type="molecule type" value="mRNA"/>
</dbReference>
<dbReference type="EMBL" id="BT000245">
    <property type="protein sequence ID" value="AAN15564.1"/>
    <property type="molecule type" value="mRNA"/>
</dbReference>
<dbReference type="PIR" id="F96540">
    <property type="entry name" value="F96540"/>
</dbReference>
<dbReference type="RefSeq" id="NP_175460.1">
    <molecule id="Q9LDU6-1"/>
    <property type="nucleotide sequence ID" value="NM_103926.5"/>
</dbReference>
<dbReference type="SMR" id="Q9LDU6"/>
<dbReference type="BioGRID" id="26690">
    <property type="interactions" value="6"/>
</dbReference>
<dbReference type="FunCoup" id="Q9LDU6">
    <property type="interactions" value="1876"/>
</dbReference>
<dbReference type="IntAct" id="Q9LDU6">
    <property type="interactions" value="5"/>
</dbReference>
<dbReference type="STRING" id="3702.Q9LDU6"/>
<dbReference type="iPTMnet" id="Q9LDU6"/>
<dbReference type="SwissPalm" id="Q9LDU6"/>
<dbReference type="PaxDb" id="3702-AT1G50430.1"/>
<dbReference type="ProteomicsDB" id="228341">
    <molecule id="Q9LDU6-1"/>
</dbReference>
<dbReference type="EnsemblPlants" id="AT1G50430.1">
    <molecule id="Q9LDU6-1"/>
    <property type="protein sequence ID" value="AT1G50430.1"/>
    <property type="gene ID" value="AT1G50430"/>
</dbReference>
<dbReference type="GeneID" id="841465"/>
<dbReference type="Gramene" id="AT1G50430.1">
    <molecule id="Q9LDU6-1"/>
    <property type="protein sequence ID" value="AT1G50430.1"/>
    <property type="gene ID" value="AT1G50430"/>
</dbReference>
<dbReference type="KEGG" id="ath:AT1G50430"/>
<dbReference type="Araport" id="AT1G50430"/>
<dbReference type="TAIR" id="AT1G50430">
    <property type="gene designation" value="DWF5"/>
</dbReference>
<dbReference type="eggNOG" id="KOG1435">
    <property type="taxonomic scope" value="Eukaryota"/>
</dbReference>
<dbReference type="InParanoid" id="Q9LDU6"/>
<dbReference type="OrthoDB" id="5326588at2759"/>
<dbReference type="PhylomeDB" id="Q9LDU6"/>
<dbReference type="BioCyc" id="ARA:AT1G50430-MONOMER"/>
<dbReference type="BioCyc" id="MetaCyc:AT1G50430-MONOMER"/>
<dbReference type="BRENDA" id="1.3.1.21">
    <property type="organism ID" value="399"/>
</dbReference>
<dbReference type="UniPathway" id="UPA00062"/>
<dbReference type="PRO" id="PR:Q9LDU6"/>
<dbReference type="Proteomes" id="UP000006548">
    <property type="component" value="Chromosome 1"/>
</dbReference>
<dbReference type="ExpressionAtlas" id="Q9LDU6">
    <property type="expression patterns" value="baseline and differential"/>
</dbReference>
<dbReference type="GO" id="GO:0005789">
    <property type="term" value="C:endoplasmic reticulum membrane"/>
    <property type="evidence" value="ECO:0007669"/>
    <property type="project" value="UniProtKB-SubCell"/>
</dbReference>
<dbReference type="GO" id="GO:0005794">
    <property type="term" value="C:Golgi apparatus"/>
    <property type="evidence" value="ECO:0007005"/>
    <property type="project" value="TAIR"/>
</dbReference>
<dbReference type="GO" id="GO:0005634">
    <property type="term" value="C:nucleus"/>
    <property type="evidence" value="ECO:0007005"/>
    <property type="project" value="TAIR"/>
</dbReference>
<dbReference type="GO" id="GO:0047598">
    <property type="term" value="F:7-dehydrocholesterol reductase activity"/>
    <property type="evidence" value="ECO:0007669"/>
    <property type="project" value="UniProtKB-EC"/>
</dbReference>
<dbReference type="GO" id="GO:0016132">
    <property type="term" value="P:brassinosteroid biosynthetic process"/>
    <property type="evidence" value="ECO:0000315"/>
    <property type="project" value="TAIR"/>
</dbReference>
<dbReference type="GO" id="GO:0006695">
    <property type="term" value="P:cholesterol biosynthetic process"/>
    <property type="evidence" value="ECO:0007669"/>
    <property type="project" value="UniProtKB-KW"/>
</dbReference>
<dbReference type="GO" id="GO:0009826">
    <property type="term" value="P:unidimensional cell growth"/>
    <property type="evidence" value="ECO:0000304"/>
    <property type="project" value="TAIR"/>
</dbReference>
<dbReference type="FunFam" id="1.20.120.1630:FF:000006">
    <property type="entry name" value="Putative 7-dehydrocholesterol reductase"/>
    <property type="match status" value="1"/>
</dbReference>
<dbReference type="Gene3D" id="1.20.120.1630">
    <property type="match status" value="1"/>
</dbReference>
<dbReference type="InterPro" id="IPR001171">
    <property type="entry name" value="ERG24_DHCR-like"/>
</dbReference>
<dbReference type="InterPro" id="IPR018083">
    <property type="entry name" value="Sterol_reductase_CS"/>
</dbReference>
<dbReference type="PANTHER" id="PTHR21257:SF38">
    <property type="entry name" value="7-DEHYDROCHOLESTEROL REDUCTASE"/>
    <property type="match status" value="1"/>
</dbReference>
<dbReference type="PANTHER" id="PTHR21257">
    <property type="entry name" value="DELTA(14)-STEROL REDUCTASE"/>
    <property type="match status" value="1"/>
</dbReference>
<dbReference type="Pfam" id="PF01222">
    <property type="entry name" value="ERG4_ERG24"/>
    <property type="match status" value="1"/>
</dbReference>
<dbReference type="PROSITE" id="PS01017">
    <property type="entry name" value="STEROL_REDUCT_1"/>
    <property type="match status" value="1"/>
</dbReference>
<dbReference type="PROSITE" id="PS01018">
    <property type="entry name" value="STEROL_REDUCT_2"/>
    <property type="match status" value="1"/>
</dbReference>
<reference key="1">
    <citation type="journal article" date="1996" name="J. Biol. Chem.">
        <title>Cloning by metabolic interference in yeast and enzymatic characterization of Arabidopsis thaliana sterol delta 7-reductase.</title>
        <authorList>
            <person name="Lecain E."/>
            <person name="Chenivesse X."/>
            <person name="Spagnoli R."/>
            <person name="Pompon D."/>
        </authorList>
    </citation>
    <scope>NUCLEOTIDE SEQUENCE [MRNA]</scope>
    <scope>CHARACTERIZATION</scope>
    <source>
        <tissue>Seedling</tissue>
    </source>
</reference>
<reference key="2">
    <citation type="journal article" date="2000" name="Plant J.">
        <title>Lesions in the sterol delta reductase gene of Arabidopsis cause dwarfism due to a block in brassinosteroid biosynthesis.</title>
        <authorList>
            <person name="Choe S."/>
            <person name="Tanaka A."/>
            <person name="Noguchi T."/>
            <person name="Fujioka S."/>
            <person name="Takatsuto S."/>
            <person name="Ross A.S."/>
            <person name="Tax F.E."/>
            <person name="Yoshida S."/>
            <person name="Feldmann K.A."/>
        </authorList>
    </citation>
    <scope>NUCLEOTIDE SEQUENCE</scope>
    <scope>MUTAGENESIS OF ASP-257</scope>
    <source>
        <strain>cv. Wassilewskija-2</strain>
    </source>
</reference>
<reference key="3">
    <citation type="journal article" date="2000" name="Nature">
        <title>Sequence and analysis of chromosome 1 of the plant Arabidopsis thaliana.</title>
        <authorList>
            <person name="Theologis A."/>
            <person name="Ecker J.R."/>
            <person name="Palm C.J."/>
            <person name="Federspiel N.A."/>
            <person name="Kaul S."/>
            <person name="White O."/>
            <person name="Alonso J."/>
            <person name="Altafi H."/>
            <person name="Araujo R."/>
            <person name="Bowman C.L."/>
            <person name="Brooks S.Y."/>
            <person name="Buehler E."/>
            <person name="Chan A."/>
            <person name="Chao Q."/>
            <person name="Chen H."/>
            <person name="Cheuk R.F."/>
            <person name="Chin C.W."/>
            <person name="Chung M.K."/>
            <person name="Conn L."/>
            <person name="Conway A.B."/>
            <person name="Conway A.R."/>
            <person name="Creasy T.H."/>
            <person name="Dewar K."/>
            <person name="Dunn P."/>
            <person name="Etgu P."/>
            <person name="Feldblyum T.V."/>
            <person name="Feng J.-D."/>
            <person name="Fong B."/>
            <person name="Fujii C.Y."/>
            <person name="Gill J.E."/>
            <person name="Goldsmith A.D."/>
            <person name="Haas B."/>
            <person name="Hansen N.F."/>
            <person name="Hughes B."/>
            <person name="Huizar L."/>
            <person name="Hunter J.L."/>
            <person name="Jenkins J."/>
            <person name="Johnson-Hopson C."/>
            <person name="Khan S."/>
            <person name="Khaykin E."/>
            <person name="Kim C.J."/>
            <person name="Koo H.L."/>
            <person name="Kremenetskaia I."/>
            <person name="Kurtz D.B."/>
            <person name="Kwan A."/>
            <person name="Lam B."/>
            <person name="Langin-Hooper S."/>
            <person name="Lee A."/>
            <person name="Lee J.M."/>
            <person name="Lenz C.A."/>
            <person name="Li J.H."/>
            <person name="Li Y.-P."/>
            <person name="Lin X."/>
            <person name="Liu S.X."/>
            <person name="Liu Z.A."/>
            <person name="Luros J.S."/>
            <person name="Maiti R."/>
            <person name="Marziali A."/>
            <person name="Militscher J."/>
            <person name="Miranda M."/>
            <person name="Nguyen M."/>
            <person name="Nierman W.C."/>
            <person name="Osborne B.I."/>
            <person name="Pai G."/>
            <person name="Peterson J."/>
            <person name="Pham P.K."/>
            <person name="Rizzo M."/>
            <person name="Rooney T."/>
            <person name="Rowley D."/>
            <person name="Sakano H."/>
            <person name="Salzberg S.L."/>
            <person name="Schwartz J.R."/>
            <person name="Shinn P."/>
            <person name="Southwick A.M."/>
            <person name="Sun H."/>
            <person name="Tallon L.J."/>
            <person name="Tambunga G."/>
            <person name="Toriumi M.J."/>
            <person name="Town C.D."/>
            <person name="Utterback T."/>
            <person name="Van Aken S."/>
            <person name="Vaysberg M."/>
            <person name="Vysotskaia V.S."/>
            <person name="Walker M."/>
            <person name="Wu D."/>
            <person name="Yu G."/>
            <person name="Fraser C.M."/>
            <person name="Venter J.C."/>
            <person name="Davis R.W."/>
        </authorList>
    </citation>
    <scope>NUCLEOTIDE SEQUENCE [LARGE SCALE GENOMIC DNA]</scope>
    <source>
        <strain>cv. Columbia</strain>
    </source>
</reference>
<reference key="4">
    <citation type="journal article" date="2017" name="Plant J.">
        <title>Araport11: a complete reannotation of the Arabidopsis thaliana reference genome.</title>
        <authorList>
            <person name="Cheng C.Y."/>
            <person name="Krishnakumar V."/>
            <person name="Chan A.P."/>
            <person name="Thibaud-Nissen F."/>
            <person name="Schobel S."/>
            <person name="Town C.D."/>
        </authorList>
    </citation>
    <scope>GENOME REANNOTATION</scope>
    <source>
        <strain>cv. Columbia</strain>
    </source>
</reference>
<reference key="5">
    <citation type="journal article" date="2003" name="Science">
        <title>Empirical analysis of transcriptional activity in the Arabidopsis genome.</title>
        <authorList>
            <person name="Yamada K."/>
            <person name="Lim J."/>
            <person name="Dale J.M."/>
            <person name="Chen H."/>
            <person name="Shinn P."/>
            <person name="Palm C.J."/>
            <person name="Southwick A.M."/>
            <person name="Wu H.C."/>
            <person name="Kim C.J."/>
            <person name="Nguyen M."/>
            <person name="Pham P.K."/>
            <person name="Cheuk R.F."/>
            <person name="Karlin-Newmann G."/>
            <person name="Liu S.X."/>
            <person name="Lam B."/>
            <person name="Sakano H."/>
            <person name="Wu T."/>
            <person name="Yu G."/>
            <person name="Miranda M."/>
            <person name="Quach H.L."/>
            <person name="Tripp M."/>
            <person name="Chang C.H."/>
            <person name="Lee J.M."/>
            <person name="Toriumi M.J."/>
            <person name="Chan M.M."/>
            <person name="Tang C.C."/>
            <person name="Onodera C.S."/>
            <person name="Deng J.M."/>
            <person name="Akiyama K."/>
            <person name="Ansari Y."/>
            <person name="Arakawa T."/>
            <person name="Banh J."/>
            <person name="Banno F."/>
            <person name="Bowser L."/>
            <person name="Brooks S.Y."/>
            <person name="Carninci P."/>
            <person name="Chao Q."/>
            <person name="Choy N."/>
            <person name="Enju A."/>
            <person name="Goldsmith A.D."/>
            <person name="Gurjal M."/>
            <person name="Hansen N.F."/>
            <person name="Hayashizaki Y."/>
            <person name="Johnson-Hopson C."/>
            <person name="Hsuan V.W."/>
            <person name="Iida K."/>
            <person name="Karnes M."/>
            <person name="Khan S."/>
            <person name="Koesema E."/>
            <person name="Ishida J."/>
            <person name="Jiang P.X."/>
            <person name="Jones T."/>
            <person name="Kawai J."/>
            <person name="Kamiya A."/>
            <person name="Meyers C."/>
            <person name="Nakajima M."/>
            <person name="Narusaka M."/>
            <person name="Seki M."/>
            <person name="Sakurai T."/>
            <person name="Satou M."/>
            <person name="Tamse R."/>
            <person name="Vaysberg M."/>
            <person name="Wallender E.K."/>
            <person name="Wong C."/>
            <person name="Yamamura Y."/>
            <person name="Yuan S."/>
            <person name="Shinozaki K."/>
            <person name="Davis R.W."/>
            <person name="Theologis A."/>
            <person name="Ecker J.R."/>
        </authorList>
    </citation>
    <scope>NUCLEOTIDE SEQUENCE [LARGE SCALE MRNA]</scope>
    <source>
        <strain>cv. Columbia</strain>
    </source>
</reference>